<gene>
    <name evidence="5" type="primary">orf5</name>
</gene>
<dbReference type="EC" id="1.-.-.-" evidence="7"/>
<dbReference type="EMBL" id="KJ728786">
    <property type="protein sequence ID" value="AIA58897.1"/>
    <property type="molecule type" value="Genomic_DNA"/>
</dbReference>
<dbReference type="SMR" id="A0A068AA78"/>
<dbReference type="GlyCosmos" id="A0A068AA78">
    <property type="glycosylation" value="4 sites, No reported glycans"/>
</dbReference>
<dbReference type="GO" id="GO:0016020">
    <property type="term" value="C:membrane"/>
    <property type="evidence" value="ECO:0007669"/>
    <property type="project" value="UniProtKB-SubCell"/>
</dbReference>
<dbReference type="GO" id="GO:0020037">
    <property type="term" value="F:heme binding"/>
    <property type="evidence" value="ECO:0007669"/>
    <property type="project" value="InterPro"/>
</dbReference>
<dbReference type="GO" id="GO:0005506">
    <property type="term" value="F:iron ion binding"/>
    <property type="evidence" value="ECO:0007669"/>
    <property type="project" value="InterPro"/>
</dbReference>
<dbReference type="GO" id="GO:0004497">
    <property type="term" value="F:monooxygenase activity"/>
    <property type="evidence" value="ECO:0007669"/>
    <property type="project" value="UniProtKB-KW"/>
</dbReference>
<dbReference type="GO" id="GO:0016705">
    <property type="term" value="F:oxidoreductase activity, acting on paired donors, with incorporation or reduction of molecular oxygen"/>
    <property type="evidence" value="ECO:0007669"/>
    <property type="project" value="InterPro"/>
</dbReference>
<dbReference type="GO" id="GO:0043386">
    <property type="term" value="P:mycotoxin biosynthetic process"/>
    <property type="evidence" value="ECO:0007669"/>
    <property type="project" value="UniProtKB-ARBA"/>
</dbReference>
<dbReference type="CDD" id="cd11061">
    <property type="entry name" value="CYP67-like"/>
    <property type="match status" value="1"/>
</dbReference>
<dbReference type="Gene3D" id="1.10.630.10">
    <property type="entry name" value="Cytochrome P450"/>
    <property type="match status" value="1"/>
</dbReference>
<dbReference type="InterPro" id="IPR001128">
    <property type="entry name" value="Cyt_P450"/>
</dbReference>
<dbReference type="InterPro" id="IPR002401">
    <property type="entry name" value="Cyt_P450_E_grp-I"/>
</dbReference>
<dbReference type="InterPro" id="IPR036396">
    <property type="entry name" value="Cyt_P450_sf"/>
</dbReference>
<dbReference type="InterPro" id="IPR050121">
    <property type="entry name" value="Cytochrome_P450_monoxygenase"/>
</dbReference>
<dbReference type="PANTHER" id="PTHR24305">
    <property type="entry name" value="CYTOCHROME P450"/>
    <property type="match status" value="1"/>
</dbReference>
<dbReference type="PANTHER" id="PTHR24305:SF187">
    <property type="entry name" value="P450, PUTATIVE (EUROFUNG)-RELATED"/>
    <property type="match status" value="1"/>
</dbReference>
<dbReference type="Pfam" id="PF00067">
    <property type="entry name" value="p450"/>
    <property type="match status" value="1"/>
</dbReference>
<dbReference type="PRINTS" id="PR00463">
    <property type="entry name" value="EP450I"/>
</dbReference>
<dbReference type="PRINTS" id="PR00385">
    <property type="entry name" value="P450"/>
</dbReference>
<dbReference type="SUPFAM" id="SSF48264">
    <property type="entry name" value="Cytochrome P450"/>
    <property type="match status" value="1"/>
</dbReference>
<organism>
    <name type="scientific">Eupenicillium brefeldianum</name>
    <name type="common">Penicillium brefeldianum</name>
    <dbReference type="NCBI Taxonomy" id="1131482"/>
    <lineage>
        <taxon>Eukaryota</taxon>
        <taxon>Fungi</taxon>
        <taxon>Dikarya</taxon>
        <taxon>Ascomycota</taxon>
        <taxon>Pezizomycotina</taxon>
        <taxon>Eurotiomycetes</taxon>
        <taxon>Eurotiomycetidae</taxon>
        <taxon>Eurotiales</taxon>
        <taxon>Aspergillaceae</taxon>
        <taxon>Penicillium</taxon>
    </lineage>
</organism>
<reference key="1">
    <citation type="journal article" date="2014" name="ACS Chem. Biol.">
        <title>Fungal polyketide synthase product chain-length control by partnering thiohydrolase.</title>
        <authorList>
            <person name="Zabala A.O."/>
            <person name="Chooi Y.H."/>
            <person name="Choi M.S."/>
            <person name="Lin H.C."/>
            <person name="Tang Y."/>
        </authorList>
    </citation>
    <scope>NUCLEOTIDE SEQUENCE [GENOMIC DNA]</scope>
    <scope>FUNCTION</scope>
    <scope>INDUCTION</scope>
    <source>
        <strain>ATCC 58665</strain>
    </source>
</reference>
<proteinExistence type="evidence at transcript level"/>
<evidence type="ECO:0000250" key="1">
    <source>
        <dbReference type="UniProtKB" id="P04798"/>
    </source>
</evidence>
<evidence type="ECO:0000255" key="2"/>
<evidence type="ECO:0000255" key="3">
    <source>
        <dbReference type="PROSITE-ProRule" id="PRU00498"/>
    </source>
</evidence>
<evidence type="ECO:0000269" key="4">
    <source>
    </source>
</evidence>
<evidence type="ECO:0000303" key="5">
    <source>
    </source>
</evidence>
<evidence type="ECO:0000305" key="6"/>
<evidence type="ECO:0000305" key="7">
    <source>
    </source>
</evidence>
<keyword id="KW-0325">Glycoprotein</keyword>
<keyword id="KW-0408">Iron</keyword>
<keyword id="KW-0472">Membrane</keyword>
<keyword id="KW-0479">Metal-binding</keyword>
<keyword id="KW-0503">Monooxygenase</keyword>
<keyword id="KW-0560">Oxidoreductase</keyword>
<keyword id="KW-0812">Transmembrane</keyword>
<keyword id="KW-1133">Transmembrane helix</keyword>
<comment type="function">
    <text evidence="4">Cytochrome P450 monooxygenase; part of the gene cluster that mediates the biosynthesis of brefeldin A (BFA), a protein transport inhibitor that shows antiviral, antifungal, and antitumor properties (PubMed:24845309). The proposed biosynthesis of BFA involves formation of an acyclic polyketide chain that is differentially tailored throughout the backbone (PubMed:24845309). The highly reducing polyketide synthase Bref-PKS is proposed to synthesize the precisely reduced octaketide precursor, which could then be directly offloaded by the thiohydrolase enzyme Bref-TH followed by a cytochrome P450 monooxygenase-mediated formation of the cyclopentane ring and macrocyclization to afford 7-deoxy BFA. Alternatively, the first ring annulation can also occur on the ACP-tethered intermediate before the thiohydrolase release and lactonization (PubMed:24845309). The C7-hydroxylation by another cytochrome P450 monooxygenase is believed to be the final step in the process to obtain the final structure of BFA (PubMed:24845309). In addition to the HRPKS Bref-PKS and the thiohydrolase Bref-TH, the brefeldin A biosynthesis cluster contains 4 cytochrome p450 monooxygenases (called orf3 to orf6), as well a the probable cluster-specific transcription regulator orf8 (PubMed:24845309).</text>
</comment>
<comment type="cofactor">
    <cofactor evidence="1">
        <name>heme</name>
        <dbReference type="ChEBI" id="CHEBI:30413"/>
    </cofactor>
</comment>
<comment type="pathway">
    <text evidence="7">Mycotoxin biosynthesis.</text>
</comment>
<comment type="subcellular location">
    <subcellularLocation>
        <location evidence="2">Membrane</location>
        <topology evidence="2">Single-pass membrane protein</topology>
    </subcellularLocation>
</comment>
<comment type="induction">
    <text evidence="4">Coexpressed with the other cluster genes on brefeldin A production optimized medium.</text>
</comment>
<comment type="similarity">
    <text evidence="6">Belongs to the cytochrome P450 family.</text>
</comment>
<protein>
    <recommendedName>
        <fullName evidence="5">Cytochrome P450 monooxygenase orf5</fullName>
        <ecNumber evidence="7">1.-.-.-</ecNumber>
    </recommendedName>
    <alternativeName>
        <fullName evidence="5">Brefeldin A biosynthesis cluster protein orf5</fullName>
    </alternativeName>
</protein>
<feature type="chain" id="PRO_0000444933" description="Cytochrome P450 monooxygenase orf5">
    <location>
        <begin position="1"/>
        <end position="489"/>
    </location>
</feature>
<feature type="transmembrane region" description="Helical" evidence="2">
    <location>
        <begin position="13"/>
        <end position="35"/>
    </location>
</feature>
<feature type="binding site" description="axial binding residue" evidence="1">
    <location>
        <position position="428"/>
    </location>
    <ligand>
        <name>heme</name>
        <dbReference type="ChEBI" id="CHEBI:30413"/>
    </ligand>
    <ligandPart>
        <name>Fe</name>
        <dbReference type="ChEBI" id="CHEBI:18248"/>
    </ligandPart>
</feature>
<feature type="glycosylation site" description="N-linked (GlcNAc...) asparagine" evidence="3">
    <location>
        <position position="37"/>
    </location>
</feature>
<feature type="glycosylation site" description="N-linked (GlcNAc...) asparagine" evidence="3">
    <location>
        <position position="118"/>
    </location>
</feature>
<feature type="glycosylation site" description="N-linked (GlcNAc...) asparagine" evidence="3">
    <location>
        <position position="171"/>
    </location>
</feature>
<feature type="glycosylation site" description="N-linked (GlcNAc...) asparagine" evidence="3">
    <location>
        <position position="345"/>
    </location>
</feature>
<name>BREF5_EUPBR</name>
<accession>A0A068AA78</accession>
<sequence length="489" mass="56075">MANDVSGLGPTAFVRLLAFHLIGLFVSITVYRLFFHNLSGFRGPFIARLSSFYLAWLSAKRLHLHDEIDDLHSLYGDYVRTGPRELSIIDPQCVQVIYGSQTKCIKGPIYTLLDPRTNLSSTRDKTEHAKRRRAWDRGFSTTALHTYEPMVQELTEELMTIIDELSENPINITEWVDKYAFEVMGQLTFGKPFNMLKERKEAYFLELIRQDMNAIGYLLNLPWLSYLFLRTPGLNQNHLNFWRWIENEFAQRIARGQRRPDVFNWLHQAYLQGPQTKSDTLKLHGDGYLVIVAGSDTTASTITHLLFYLACNKALTQKLQAQLDALEGLTDESLRDVELLDACINETLRLRPAVPAGVQRETPKEGIYIGNRYIPGDTIVKVPMYTLFRDPRSFEQPNEFIPERFTTRPELVKDKSVFIPFLTGSYACVGRRLALMEVRRAVAAILCRYDIALAPGQNEEGFLDGKIDAFTLVAAPLSLKFTRRHQQKQ</sequence>